<sequence>MTIALGKFTKDEKDLFDIMDDWLRRDRFVFVGWSGLLLFPCAYFALGGWFTGTTFVTSWYTHGLASSYLEGCNFLTAAVSTPANSLAHSLLLLWGPEAQGDFTRWCQLGGLWAFVALHGAFALIGFMLRQFELARSVQLRPYNAIAFSGPIAVFVSVFLIYPLGQSGWFFAPSFGVAAIFRFILFFQGFHNWTLNPFHMMGVAGVLGAALLCAIHGATVENTLFEDGDGANTFRAFNPTQAEETYSMVTANRFWSQIFGVAFSNKRWLHFFMLFVPVTGLWMSALGVVGLALNLRAYDFVSQEIRAAEDPEFETFYTKNILLNEGIRAWMAAQDQPHENLIFPEEVLPRGNAL</sequence>
<comment type="function">
    <text evidence="2">Photosystem II (PSII) is a light-driven water:plastoquinone oxidoreductase that uses light energy to abstract electrons from H(2)O, generating O(2) and a proton gradient subsequently used for ATP formation. It consists of a core antenna complex that captures photons, and an electron transfer chain that converts photonic excitation into a charge separation. The D1/D2 (PsbA/PsbD) reaction center heterodimer binds P680, the primary electron donor of PSII as well as several subsequent electron acceptors. D2 is needed for assembly of a stable PSII complex.</text>
</comment>
<comment type="catalytic activity">
    <reaction evidence="2">
        <text>2 a plastoquinone + 4 hnu + 2 H2O = 2 a plastoquinol + O2</text>
        <dbReference type="Rhea" id="RHEA:36359"/>
        <dbReference type="Rhea" id="RHEA-COMP:9561"/>
        <dbReference type="Rhea" id="RHEA-COMP:9562"/>
        <dbReference type="ChEBI" id="CHEBI:15377"/>
        <dbReference type="ChEBI" id="CHEBI:15379"/>
        <dbReference type="ChEBI" id="CHEBI:17757"/>
        <dbReference type="ChEBI" id="CHEBI:30212"/>
        <dbReference type="ChEBI" id="CHEBI:62192"/>
        <dbReference type="EC" id="1.10.3.9"/>
    </reaction>
</comment>
<comment type="cofactor">
    <text evidence="2">The D1/D2 heterodimer binds P680, chlorophylls that are the primary electron donor of PSII, and subsequent electron acceptors. It shares a non-heme iron and each subunit binds pheophytin, quinone, additional chlorophylls, carotenoids and lipids. There is also a Cl(-1) ion associated with D1 and D2, which is required for oxygen evolution. The PSII complex binds additional chlorophylls, carotenoids and specific lipids.</text>
</comment>
<comment type="subunit">
    <text evidence="2">PSII is composed of 1 copy each of membrane proteins PsbA, PsbB, PsbC, PsbD, PsbE, PsbF, PsbH, PsbI, PsbJ, PsbK, PsbL, PsbM, PsbT, PsbX, PsbY, PsbZ, Psb30/Ycf12, at least 3 peripheral proteins of the oxygen-evolving complex and a large number of cofactors. It forms dimeric complexes.</text>
</comment>
<comment type="subcellular location">
    <subcellularLocation>
        <location evidence="2">Plastid</location>
        <location evidence="2">Chloroplast thylakoid membrane</location>
        <topology evidence="2">Multi-pass membrane protein</topology>
    </subcellularLocation>
</comment>
<comment type="miscellaneous">
    <text evidence="2">2 of the reaction center chlorophylls (ChlD1 and ChlD2) are entirely coordinated by water.</text>
</comment>
<comment type="similarity">
    <text evidence="2">Belongs to the reaction center PufL/M/PsbA/D family.</text>
</comment>
<gene>
    <name evidence="2" type="primary">psbD</name>
</gene>
<geneLocation type="chloroplast"/>
<proteinExistence type="inferred from homology"/>
<reference key="1">
    <citation type="submission" date="2007-03" db="EMBL/GenBank/DDBJ databases">
        <title>Sequencing analysis of Draba nemoroza chloroplast DNA.</title>
        <authorList>
            <person name="Hosouchi T."/>
            <person name="Tsuruoka H."/>
            <person name="Kotani H."/>
        </authorList>
    </citation>
    <scope>NUCLEOTIDE SEQUENCE [LARGE SCALE GENOMIC DNA]</scope>
</reference>
<name>PSBD_DRANE</name>
<dbReference type="EC" id="1.10.3.9" evidence="2"/>
<dbReference type="EMBL" id="AP009373">
    <property type="protein sequence ID" value="BAF50369.1"/>
    <property type="molecule type" value="Genomic_DNA"/>
</dbReference>
<dbReference type="RefSeq" id="YP_001123545.1">
    <property type="nucleotide sequence ID" value="NC_009272.1"/>
</dbReference>
<dbReference type="SMR" id="A4QL14"/>
<dbReference type="GeneID" id="4964698"/>
<dbReference type="GO" id="GO:0009535">
    <property type="term" value="C:chloroplast thylakoid membrane"/>
    <property type="evidence" value="ECO:0007669"/>
    <property type="project" value="UniProtKB-SubCell"/>
</dbReference>
<dbReference type="GO" id="GO:0009523">
    <property type="term" value="C:photosystem II"/>
    <property type="evidence" value="ECO:0007669"/>
    <property type="project" value="UniProtKB-KW"/>
</dbReference>
<dbReference type="GO" id="GO:0016168">
    <property type="term" value="F:chlorophyll binding"/>
    <property type="evidence" value="ECO:0007669"/>
    <property type="project" value="UniProtKB-UniRule"/>
</dbReference>
<dbReference type="GO" id="GO:0045156">
    <property type="term" value="F:electron transporter, transferring electrons within the cyclic electron transport pathway of photosynthesis activity"/>
    <property type="evidence" value="ECO:0007669"/>
    <property type="project" value="InterPro"/>
</dbReference>
<dbReference type="GO" id="GO:0005506">
    <property type="term" value="F:iron ion binding"/>
    <property type="evidence" value="ECO:0007669"/>
    <property type="project" value="UniProtKB-UniRule"/>
</dbReference>
<dbReference type="GO" id="GO:0010242">
    <property type="term" value="F:oxygen evolving activity"/>
    <property type="evidence" value="ECO:0007669"/>
    <property type="project" value="UniProtKB-EC"/>
</dbReference>
<dbReference type="GO" id="GO:0009772">
    <property type="term" value="P:photosynthetic electron transport in photosystem II"/>
    <property type="evidence" value="ECO:0007669"/>
    <property type="project" value="InterPro"/>
</dbReference>
<dbReference type="CDD" id="cd09288">
    <property type="entry name" value="Photosystem-II_D2"/>
    <property type="match status" value="1"/>
</dbReference>
<dbReference type="FunFam" id="1.20.85.10:FF:000001">
    <property type="entry name" value="photosystem II D2 protein-like"/>
    <property type="match status" value="1"/>
</dbReference>
<dbReference type="Gene3D" id="1.20.85.10">
    <property type="entry name" value="Photosystem II protein D1-like"/>
    <property type="match status" value="1"/>
</dbReference>
<dbReference type="HAMAP" id="MF_01383">
    <property type="entry name" value="PSII_PsbD_D2"/>
    <property type="match status" value="1"/>
</dbReference>
<dbReference type="InterPro" id="IPR055266">
    <property type="entry name" value="D1/D2"/>
</dbReference>
<dbReference type="InterPro" id="IPR036854">
    <property type="entry name" value="Photo_II_D1/D2_sf"/>
</dbReference>
<dbReference type="InterPro" id="IPR000484">
    <property type="entry name" value="Photo_RC_L/M"/>
</dbReference>
<dbReference type="InterPro" id="IPR055265">
    <property type="entry name" value="Photo_RC_L/M_CS"/>
</dbReference>
<dbReference type="InterPro" id="IPR005868">
    <property type="entry name" value="PSII_PsbD/D2"/>
</dbReference>
<dbReference type="NCBIfam" id="TIGR01152">
    <property type="entry name" value="psbD"/>
    <property type="match status" value="1"/>
</dbReference>
<dbReference type="PANTHER" id="PTHR33149:SF57">
    <property type="entry name" value="PHOTOSYSTEM II D2 PROTEIN"/>
    <property type="match status" value="1"/>
</dbReference>
<dbReference type="PANTHER" id="PTHR33149">
    <property type="entry name" value="PHOTOSYSTEM II PROTEIN D1"/>
    <property type="match status" value="1"/>
</dbReference>
<dbReference type="Pfam" id="PF00124">
    <property type="entry name" value="Photo_RC"/>
    <property type="match status" value="1"/>
</dbReference>
<dbReference type="PRINTS" id="PR00256">
    <property type="entry name" value="REACTNCENTRE"/>
</dbReference>
<dbReference type="SUPFAM" id="SSF81483">
    <property type="entry name" value="Bacterial photosystem II reaction centre, L and M subunits"/>
    <property type="match status" value="1"/>
</dbReference>
<dbReference type="PROSITE" id="PS00244">
    <property type="entry name" value="REACTION_CENTER"/>
    <property type="match status" value="1"/>
</dbReference>
<accession>A4QL14</accession>
<evidence type="ECO:0000250" key="1">
    <source>
        <dbReference type="UniProtKB" id="P56761"/>
    </source>
</evidence>
<evidence type="ECO:0000255" key="2">
    <source>
        <dbReference type="HAMAP-Rule" id="MF_01383"/>
    </source>
</evidence>
<keyword id="KW-0007">Acetylation</keyword>
<keyword id="KW-0148">Chlorophyll</keyword>
<keyword id="KW-0150">Chloroplast</keyword>
<keyword id="KW-0157">Chromophore</keyword>
<keyword id="KW-0249">Electron transport</keyword>
<keyword id="KW-0408">Iron</keyword>
<keyword id="KW-0460">Magnesium</keyword>
<keyword id="KW-0472">Membrane</keyword>
<keyword id="KW-0479">Metal-binding</keyword>
<keyword id="KW-0560">Oxidoreductase</keyword>
<keyword id="KW-0597">Phosphoprotein</keyword>
<keyword id="KW-0602">Photosynthesis</keyword>
<keyword id="KW-0604">Photosystem II</keyword>
<keyword id="KW-0934">Plastid</keyword>
<keyword id="KW-0793">Thylakoid</keyword>
<keyword id="KW-0812">Transmembrane</keyword>
<keyword id="KW-1133">Transmembrane helix</keyword>
<keyword id="KW-0813">Transport</keyword>
<organism>
    <name type="scientific">Draba nemorosa</name>
    <name type="common">Woodland whitlowgrass</name>
    <dbReference type="NCBI Taxonomy" id="171822"/>
    <lineage>
        <taxon>Eukaryota</taxon>
        <taxon>Viridiplantae</taxon>
        <taxon>Streptophyta</taxon>
        <taxon>Embryophyta</taxon>
        <taxon>Tracheophyta</taxon>
        <taxon>Spermatophyta</taxon>
        <taxon>Magnoliopsida</taxon>
        <taxon>eudicotyledons</taxon>
        <taxon>Gunneridae</taxon>
        <taxon>Pentapetalae</taxon>
        <taxon>rosids</taxon>
        <taxon>malvids</taxon>
        <taxon>Brassicales</taxon>
        <taxon>Brassicaceae</taxon>
        <taxon>Arabideae</taxon>
        <taxon>Draba</taxon>
    </lineage>
</organism>
<protein>
    <recommendedName>
        <fullName evidence="2">Photosystem II D2 protein</fullName>
        <shortName evidence="2">PSII D2 protein</shortName>
        <ecNumber evidence="2">1.10.3.9</ecNumber>
    </recommendedName>
    <alternativeName>
        <fullName evidence="2">Photosystem Q(A) protein</fullName>
    </alternativeName>
</protein>
<feature type="initiator methionine" description="Removed" evidence="1">
    <location>
        <position position="1"/>
    </location>
</feature>
<feature type="chain" id="PRO_0000359649" description="Photosystem II D2 protein">
    <location>
        <begin position="2"/>
        <end position="353"/>
    </location>
</feature>
<feature type="transmembrane region" description="Helical" evidence="2">
    <location>
        <begin position="41"/>
        <end position="61"/>
    </location>
</feature>
<feature type="transmembrane region" description="Helical" evidence="2">
    <location>
        <begin position="125"/>
        <end position="141"/>
    </location>
</feature>
<feature type="transmembrane region" description="Helical" evidence="2">
    <location>
        <begin position="153"/>
        <end position="166"/>
    </location>
</feature>
<feature type="transmembrane region" description="Helical" evidence="2">
    <location>
        <begin position="208"/>
        <end position="228"/>
    </location>
</feature>
<feature type="transmembrane region" description="Helical" evidence="2">
    <location>
        <begin position="279"/>
        <end position="295"/>
    </location>
</feature>
<feature type="binding site" description="axial binding residue" evidence="2">
    <location>
        <position position="118"/>
    </location>
    <ligand>
        <name>chlorophyll a</name>
        <dbReference type="ChEBI" id="CHEBI:58416"/>
        <label>ChlzD2</label>
    </ligand>
    <ligandPart>
        <name>Mg</name>
        <dbReference type="ChEBI" id="CHEBI:25107"/>
    </ligandPart>
</feature>
<feature type="binding site" evidence="2">
    <location>
        <position position="130"/>
    </location>
    <ligand>
        <name>pheophytin a</name>
        <dbReference type="ChEBI" id="CHEBI:136840"/>
        <label>D2</label>
    </ligand>
</feature>
<feature type="binding site" evidence="2">
    <location>
        <position position="143"/>
    </location>
    <ligand>
        <name>pheophytin a</name>
        <dbReference type="ChEBI" id="CHEBI:136840"/>
        <label>D2</label>
    </ligand>
</feature>
<feature type="binding site" description="axial binding residue" evidence="2">
    <location>
        <position position="198"/>
    </location>
    <ligand>
        <name>chlorophyll a</name>
        <dbReference type="ChEBI" id="CHEBI:58416"/>
        <label>PD2</label>
    </ligand>
    <ligandPart>
        <name>Mg</name>
        <dbReference type="ChEBI" id="CHEBI:25107"/>
    </ligandPart>
</feature>
<feature type="binding site" evidence="2">
    <location>
        <position position="215"/>
    </location>
    <ligand>
        <name>a plastoquinone</name>
        <dbReference type="ChEBI" id="CHEBI:17757"/>
        <label>Q(A)</label>
    </ligand>
</feature>
<feature type="binding site" evidence="2">
    <location>
        <position position="215"/>
    </location>
    <ligand>
        <name>Fe cation</name>
        <dbReference type="ChEBI" id="CHEBI:24875"/>
        <note>ligand shared with heterodimeric partner</note>
    </ligand>
</feature>
<feature type="binding site" evidence="2">
    <location>
        <position position="262"/>
    </location>
    <ligand>
        <name>a plastoquinone</name>
        <dbReference type="ChEBI" id="CHEBI:17757"/>
        <label>Q(A)</label>
    </ligand>
</feature>
<feature type="binding site" evidence="2">
    <location>
        <position position="269"/>
    </location>
    <ligand>
        <name>Fe cation</name>
        <dbReference type="ChEBI" id="CHEBI:24875"/>
        <note>ligand shared with heterodimeric partner</note>
    </ligand>
</feature>
<feature type="modified residue" description="N-acetylthreonine" evidence="1">
    <location>
        <position position="2"/>
    </location>
</feature>
<feature type="modified residue" description="Phosphothreonine" evidence="1">
    <location>
        <position position="2"/>
    </location>
</feature>